<dbReference type="EMBL" id="CR859754">
    <property type="protein sequence ID" value="CAH91912.1"/>
    <property type="molecule type" value="mRNA"/>
</dbReference>
<dbReference type="RefSeq" id="NP_001127480.1">
    <property type="nucleotide sequence ID" value="NM_001134008.1"/>
</dbReference>
<dbReference type="SMR" id="Q5R8J8"/>
<dbReference type="STRING" id="9601.ENSPPYP00000001411"/>
<dbReference type="GeneID" id="100174554"/>
<dbReference type="KEGG" id="pon:100174554"/>
<dbReference type="CTD" id="11080"/>
<dbReference type="eggNOG" id="KOG0714">
    <property type="taxonomic scope" value="Eukaryota"/>
</dbReference>
<dbReference type="InParanoid" id="Q5R8J8"/>
<dbReference type="OrthoDB" id="550424at2759"/>
<dbReference type="Proteomes" id="UP000001595">
    <property type="component" value="Unplaced"/>
</dbReference>
<dbReference type="GO" id="GO:0005829">
    <property type="term" value="C:cytosol"/>
    <property type="evidence" value="ECO:0007669"/>
    <property type="project" value="TreeGrafter"/>
</dbReference>
<dbReference type="GO" id="GO:0005886">
    <property type="term" value="C:plasma membrane"/>
    <property type="evidence" value="ECO:0007669"/>
    <property type="project" value="UniProtKB-SubCell"/>
</dbReference>
<dbReference type="GO" id="GO:0030018">
    <property type="term" value="C:Z disc"/>
    <property type="evidence" value="ECO:0000250"/>
    <property type="project" value="UniProtKB"/>
</dbReference>
<dbReference type="GO" id="GO:0001671">
    <property type="term" value="F:ATPase activator activity"/>
    <property type="evidence" value="ECO:0000250"/>
    <property type="project" value="UniProtKB"/>
</dbReference>
<dbReference type="GO" id="GO:0051087">
    <property type="term" value="F:protein-folding chaperone binding"/>
    <property type="evidence" value="ECO:0007669"/>
    <property type="project" value="TreeGrafter"/>
</dbReference>
<dbReference type="GO" id="GO:0051082">
    <property type="term" value="F:unfolded protein binding"/>
    <property type="evidence" value="ECO:0007669"/>
    <property type="project" value="InterPro"/>
</dbReference>
<dbReference type="GO" id="GO:0051085">
    <property type="term" value="P:chaperone cofactor-dependent protein refolding"/>
    <property type="evidence" value="ECO:0007669"/>
    <property type="project" value="TreeGrafter"/>
</dbReference>
<dbReference type="GO" id="GO:0000122">
    <property type="term" value="P:negative regulation of transcription by RNA polymerase II"/>
    <property type="evidence" value="ECO:0007669"/>
    <property type="project" value="TreeGrafter"/>
</dbReference>
<dbReference type="CDD" id="cd06257">
    <property type="entry name" value="DnaJ"/>
    <property type="match status" value="1"/>
</dbReference>
<dbReference type="CDD" id="cd10747">
    <property type="entry name" value="DnaJ_C"/>
    <property type="match status" value="1"/>
</dbReference>
<dbReference type="FunFam" id="1.10.287.110:FF:000005">
    <property type="entry name" value="DnaJ (Hsp40) homolog, subfamily B, member 4"/>
    <property type="match status" value="1"/>
</dbReference>
<dbReference type="FunFam" id="2.60.260.20:FF:000002">
    <property type="entry name" value="Dnaj homolog subfamily b member"/>
    <property type="match status" value="1"/>
</dbReference>
<dbReference type="FunFam" id="2.60.260.20:FF:000007">
    <property type="entry name" value="dnaJ homolog subfamily B member 5"/>
    <property type="match status" value="1"/>
</dbReference>
<dbReference type="Gene3D" id="1.10.287.110">
    <property type="entry name" value="DnaJ domain"/>
    <property type="match status" value="1"/>
</dbReference>
<dbReference type="Gene3D" id="2.60.260.20">
    <property type="entry name" value="Urease metallochaperone UreE, N-terminal domain"/>
    <property type="match status" value="2"/>
</dbReference>
<dbReference type="InterPro" id="IPR002939">
    <property type="entry name" value="DnaJ_C"/>
</dbReference>
<dbReference type="InterPro" id="IPR001623">
    <property type="entry name" value="DnaJ_domain"/>
</dbReference>
<dbReference type="InterPro" id="IPR018253">
    <property type="entry name" value="DnaJ_domain_CS"/>
</dbReference>
<dbReference type="InterPro" id="IPR051339">
    <property type="entry name" value="DnaJ_subfamily_B"/>
</dbReference>
<dbReference type="InterPro" id="IPR008971">
    <property type="entry name" value="HSP40/DnaJ_pept-bd"/>
</dbReference>
<dbReference type="InterPro" id="IPR036869">
    <property type="entry name" value="J_dom_sf"/>
</dbReference>
<dbReference type="PANTHER" id="PTHR24078:SF288">
    <property type="entry name" value="DNAJ HOMOLOG SUBFAMILY B MEMBER 4"/>
    <property type="match status" value="1"/>
</dbReference>
<dbReference type="PANTHER" id="PTHR24078">
    <property type="entry name" value="DNAJ HOMOLOG SUBFAMILY C MEMBER"/>
    <property type="match status" value="1"/>
</dbReference>
<dbReference type="Pfam" id="PF00226">
    <property type="entry name" value="DnaJ"/>
    <property type="match status" value="1"/>
</dbReference>
<dbReference type="Pfam" id="PF01556">
    <property type="entry name" value="DnaJ_C"/>
    <property type="match status" value="1"/>
</dbReference>
<dbReference type="PRINTS" id="PR00625">
    <property type="entry name" value="JDOMAIN"/>
</dbReference>
<dbReference type="SMART" id="SM00271">
    <property type="entry name" value="DnaJ"/>
    <property type="match status" value="1"/>
</dbReference>
<dbReference type="SUPFAM" id="SSF46565">
    <property type="entry name" value="Chaperone J-domain"/>
    <property type="match status" value="1"/>
</dbReference>
<dbReference type="SUPFAM" id="SSF49493">
    <property type="entry name" value="HSP40/DnaJ peptide-binding domain"/>
    <property type="match status" value="2"/>
</dbReference>
<dbReference type="PROSITE" id="PS00636">
    <property type="entry name" value="DNAJ_1"/>
    <property type="match status" value="1"/>
</dbReference>
<dbReference type="PROSITE" id="PS50076">
    <property type="entry name" value="DNAJ_2"/>
    <property type="match status" value="1"/>
</dbReference>
<protein>
    <recommendedName>
        <fullName>DnaJ homolog subfamily B member 4</fullName>
    </recommendedName>
</protein>
<keyword id="KW-1003">Cell membrane</keyword>
<keyword id="KW-0143">Chaperone</keyword>
<keyword id="KW-0963">Cytoplasm</keyword>
<keyword id="KW-0472">Membrane</keyword>
<keyword id="KW-0597">Phosphoprotein</keyword>
<keyword id="KW-1185">Reference proteome</keyword>
<feature type="chain" id="PRO_0000290021" description="DnaJ homolog subfamily B member 4">
    <location>
        <begin position="1"/>
        <end position="337"/>
    </location>
</feature>
<feature type="domain" description="J" evidence="2">
    <location>
        <begin position="2"/>
        <end position="70"/>
    </location>
</feature>
<feature type="modified residue" description="Phosphoserine" evidence="1">
    <location>
        <position position="122"/>
    </location>
</feature>
<feature type="modified residue" description="Phosphoserine" evidence="1">
    <location>
        <position position="148"/>
    </location>
</feature>
<name>DNJB4_PONAB</name>
<accession>Q5R8J8</accession>
<proteinExistence type="evidence at transcript level"/>
<gene>
    <name type="primary">DNAJB4</name>
</gene>
<reference key="1">
    <citation type="submission" date="2004-11" db="EMBL/GenBank/DDBJ databases">
        <authorList>
            <consortium name="The German cDNA consortium"/>
        </authorList>
    </citation>
    <scope>NUCLEOTIDE SEQUENCE [LARGE SCALE MRNA]</scope>
    <source>
        <tissue>Kidney</tissue>
    </source>
</reference>
<organism>
    <name type="scientific">Pongo abelii</name>
    <name type="common">Sumatran orangutan</name>
    <name type="synonym">Pongo pygmaeus abelii</name>
    <dbReference type="NCBI Taxonomy" id="9601"/>
    <lineage>
        <taxon>Eukaryota</taxon>
        <taxon>Metazoa</taxon>
        <taxon>Chordata</taxon>
        <taxon>Craniata</taxon>
        <taxon>Vertebrata</taxon>
        <taxon>Euteleostomi</taxon>
        <taxon>Mammalia</taxon>
        <taxon>Eutheria</taxon>
        <taxon>Euarchontoglires</taxon>
        <taxon>Primates</taxon>
        <taxon>Haplorrhini</taxon>
        <taxon>Catarrhini</taxon>
        <taxon>Hominidae</taxon>
        <taxon>Pongo</taxon>
    </lineage>
</organism>
<evidence type="ECO:0000250" key="1">
    <source>
        <dbReference type="UniProtKB" id="Q9UDY4"/>
    </source>
</evidence>
<evidence type="ECO:0000255" key="2">
    <source>
        <dbReference type="PROSITE-ProRule" id="PRU00286"/>
    </source>
</evidence>
<comment type="function">
    <text evidence="1">Probable chaperone. Stimulates ATP hydrolysis and the folding of unfolded proteins mediated by HSPA1A/B (in vitro).</text>
</comment>
<comment type="subunit">
    <text evidence="1">Homodimer. The C-terminal section interacts with the C-terminal tail of OPRM1. Also interacts with SDIM1.</text>
</comment>
<comment type="subcellular location">
    <subcellularLocation>
        <location evidence="1">Cytoplasm</location>
    </subcellularLocation>
    <subcellularLocation>
        <location evidence="1">Cell membrane</location>
    </subcellularLocation>
    <subcellularLocation>
        <location evidence="1">Cytoplasm</location>
        <location evidence="1">Myofibril</location>
        <location evidence="1">Sarcomere</location>
        <location evidence="1">Z line</location>
    </subcellularLocation>
</comment>
<sequence length="337" mass="37825">MGKDYYCILGIEKGASDEDIKKAYRKQALKFHPDKNKSPQAEEKFKEVAEAYEVLSDPKKREIYDQFGEEGLKGGAGGTDGQGGTFRYTFHGDPHATFAAFFGGSNPFEIFFGRRMGGGRDSEEMEMDGDPFSAFGFSMNGYPRDRNSVGPSRLKQDPPVIHELRVSLEEIYSGCTKRMKISRKRLNADGRSYRSEDKILTIEIKKGWKEGTKITFPREGDETPNSIPADIVFIIKDKDHPKFKRDGSNIIYTAKISLREALCGCSINVPTLDGRNIPMSVNDIVKPGMRRRIIGYGLPFPKNPDQRGDLLIEFEVSFPDTISSSSKEVLRKHLPAS</sequence>